<gene>
    <name type="ordered locus">MT2134</name>
</gene>
<dbReference type="EC" id="1.3.98.-" evidence="1"/>
<dbReference type="EMBL" id="AE000516">
    <property type="protein sequence ID" value="AAK46414.1"/>
    <property type="molecule type" value="Genomic_DNA"/>
</dbReference>
<dbReference type="PIR" id="E70765">
    <property type="entry name" value="E70765"/>
</dbReference>
<dbReference type="RefSeq" id="WP_003899157.1">
    <property type="nucleotide sequence ID" value="NZ_KK341227.1"/>
</dbReference>
<dbReference type="SMR" id="P9WLL6"/>
<dbReference type="KEGG" id="mtc:MT2134"/>
<dbReference type="PATRIC" id="fig|83331.31.peg.2302"/>
<dbReference type="HOGENOM" id="CLU_134364_0_0_11"/>
<dbReference type="Proteomes" id="UP000001020">
    <property type="component" value="Chromosome"/>
</dbReference>
<dbReference type="GO" id="GO:0009986">
    <property type="term" value="C:cell surface"/>
    <property type="evidence" value="ECO:0007669"/>
    <property type="project" value="UniProtKB-SubCell"/>
</dbReference>
<dbReference type="GO" id="GO:0005829">
    <property type="term" value="C:cytosol"/>
    <property type="evidence" value="ECO:0007669"/>
    <property type="project" value="TreeGrafter"/>
</dbReference>
<dbReference type="GO" id="GO:0005576">
    <property type="term" value="C:extracellular region"/>
    <property type="evidence" value="ECO:0007669"/>
    <property type="project" value="UniProtKB-SubCell"/>
</dbReference>
<dbReference type="GO" id="GO:0070967">
    <property type="term" value="F:coenzyme F420 binding"/>
    <property type="evidence" value="ECO:0007669"/>
    <property type="project" value="TreeGrafter"/>
</dbReference>
<dbReference type="GO" id="GO:0016627">
    <property type="term" value="F:oxidoreductase activity, acting on the CH-CH group of donors"/>
    <property type="evidence" value="ECO:0007669"/>
    <property type="project" value="TreeGrafter"/>
</dbReference>
<dbReference type="FunFam" id="2.30.110.10:FF:000009">
    <property type="entry name" value="PPOX class F420-dependent enzyme"/>
    <property type="match status" value="1"/>
</dbReference>
<dbReference type="Gene3D" id="2.30.110.10">
    <property type="entry name" value="Electron Transport, Fmn-binding Protein, Chain A"/>
    <property type="match status" value="1"/>
</dbReference>
<dbReference type="InterPro" id="IPR019920">
    <property type="entry name" value="F420-binding_dom_put"/>
</dbReference>
<dbReference type="InterPro" id="IPR052019">
    <property type="entry name" value="F420H2_bilvrd_red/Heme_oxyg"/>
</dbReference>
<dbReference type="InterPro" id="IPR011576">
    <property type="entry name" value="Pyridox_Oxase_N"/>
</dbReference>
<dbReference type="InterPro" id="IPR012349">
    <property type="entry name" value="Split_barrel_FMN-bd"/>
</dbReference>
<dbReference type="NCBIfam" id="TIGR03618">
    <property type="entry name" value="Rv1155_F420"/>
    <property type="match status" value="1"/>
</dbReference>
<dbReference type="PANTHER" id="PTHR35176:SF1">
    <property type="entry name" value="F420H(2)-DEPENDENT BILIVERDIN REDUCTASE"/>
    <property type="match status" value="1"/>
</dbReference>
<dbReference type="PANTHER" id="PTHR35176">
    <property type="entry name" value="HEME OXYGENASE HI_0854-RELATED"/>
    <property type="match status" value="1"/>
</dbReference>
<dbReference type="Pfam" id="PF01243">
    <property type="entry name" value="PNPOx_N"/>
    <property type="match status" value="1"/>
</dbReference>
<dbReference type="SUPFAM" id="SSF50475">
    <property type="entry name" value="FMN-binding split barrel"/>
    <property type="match status" value="1"/>
</dbReference>
<proteinExistence type="inferred from homology"/>
<sequence>MAMVNTTTRLSDDALAFLSERHLAMLTTLRADNSPHVVAVGFTFDPKTHIARVITTGGSQKAVNADRSGLAVLSQVDGARWLSLEGRAAVNSDIDAVRDAELRYAQRYRTPRPNPRRVVIEVQIERVLGSADLLDRA</sequence>
<feature type="chain" id="PRO_0000427457" description="F420H(2)-dependent biliverdin reductase">
    <location>
        <begin position="1"/>
        <end position="137"/>
    </location>
</feature>
<feature type="binding site" description="in other chain" evidence="1">
    <location>
        <begin position="36"/>
        <end position="41"/>
    </location>
    <ligand>
        <name>coenzyme F420-(gamma-Glu)n</name>
        <dbReference type="ChEBI" id="CHEBI:133980"/>
        <note>ligand shared between dimeric partners</note>
    </ligand>
</feature>
<feature type="binding site" description="in other chain" evidence="1">
    <location>
        <begin position="54"/>
        <end position="55"/>
    </location>
    <ligand>
        <name>coenzyme F420-(gamma-Glu)n</name>
        <dbReference type="ChEBI" id="CHEBI:133980"/>
        <note>ligand shared between dimeric partners</note>
    </ligand>
</feature>
<feature type="binding site" description="in other chain" evidence="1">
    <location>
        <begin position="60"/>
        <end position="61"/>
    </location>
    <ligand>
        <name>coenzyme F420-(gamma-Glu)n</name>
        <dbReference type="ChEBI" id="CHEBI:133980"/>
        <note>ligand shared between dimeric partners</note>
    </ligand>
</feature>
<feature type="binding site" description="in other chain" evidence="1">
    <location>
        <position position="67"/>
    </location>
    <ligand>
        <name>coenzyme F420-(gamma-Glu)n</name>
        <dbReference type="ChEBI" id="CHEBI:133980"/>
        <note>ligand shared between dimeric partners</note>
    </ligand>
</feature>
<feature type="binding site" evidence="1">
    <location>
        <begin position="78"/>
        <end position="81"/>
    </location>
    <ligand>
        <name>coenzyme F420-(gamma-Glu)n</name>
        <dbReference type="ChEBI" id="CHEBI:133980"/>
        <note>ligand shared between dimeric partners</note>
    </ligand>
</feature>
<comment type="function">
    <text evidence="1">Catalyzes the F420H(2)-dependent reduction of biliverdin-IXalpha at C10 position, leading to bilirubin-IXalpha, a potent antioxidant. As biliverdin-IXalpha is produced in high amounts in macrophages infected with M.tuberculosis, its reduction by Rv2074 may play a role in protecting mycobacteria against oxidative stress, aiding the persistence of M.tuberculosis infection.</text>
</comment>
<comment type="catalytic activity">
    <reaction evidence="1">
        <text>(4Z,15Z)-bilirubin IXalpha + oxidized coenzyme F420-(gamma-L-Glu)(n) + H(+) = biliverdin IXalpha + reduced coenzyme F420-(gamma-L-Glu)(n)</text>
        <dbReference type="Rhea" id="RHEA:56092"/>
        <dbReference type="Rhea" id="RHEA-COMP:12939"/>
        <dbReference type="Rhea" id="RHEA-COMP:14378"/>
        <dbReference type="ChEBI" id="CHEBI:15378"/>
        <dbReference type="ChEBI" id="CHEBI:57977"/>
        <dbReference type="ChEBI" id="CHEBI:57991"/>
        <dbReference type="ChEBI" id="CHEBI:133980"/>
        <dbReference type="ChEBI" id="CHEBI:139511"/>
    </reaction>
</comment>
<comment type="subunit">
    <text evidence="1">Homodimer.</text>
</comment>
<comment type="subcellular location">
    <subcellularLocation>
        <location evidence="1">Cell surface</location>
    </subcellularLocation>
    <subcellularLocation>
        <location evidence="1">Secreted</location>
    </subcellularLocation>
</comment>
<comment type="similarity">
    <text evidence="2">Belongs to the F420H(2)-dependent biliverdin reductase family.</text>
</comment>
<protein>
    <recommendedName>
        <fullName evidence="1">F420H(2)-dependent biliverdin reductase</fullName>
        <shortName evidence="1">F-BVR</shortName>
        <ecNumber evidence="1">1.3.98.-</ecNumber>
    </recommendedName>
</protein>
<accession>P9WLL6</accession>
<accession>L0T8P9</accession>
<accession>Q10682</accession>
<keyword id="KW-0560">Oxidoreductase</keyword>
<keyword id="KW-1185">Reference proteome</keyword>
<keyword id="KW-0964">Secreted</keyword>
<evidence type="ECO:0000250" key="1">
    <source>
        <dbReference type="UniProtKB" id="P9WLL7"/>
    </source>
</evidence>
<evidence type="ECO:0000305" key="2"/>
<organism>
    <name type="scientific">Mycobacterium tuberculosis (strain CDC 1551 / Oshkosh)</name>
    <dbReference type="NCBI Taxonomy" id="83331"/>
    <lineage>
        <taxon>Bacteria</taxon>
        <taxon>Bacillati</taxon>
        <taxon>Actinomycetota</taxon>
        <taxon>Actinomycetes</taxon>
        <taxon>Mycobacteriales</taxon>
        <taxon>Mycobacteriaceae</taxon>
        <taxon>Mycobacterium</taxon>
        <taxon>Mycobacterium tuberculosis complex</taxon>
    </lineage>
</organism>
<reference key="1">
    <citation type="journal article" date="2002" name="J. Bacteriol.">
        <title>Whole-genome comparison of Mycobacterium tuberculosis clinical and laboratory strains.</title>
        <authorList>
            <person name="Fleischmann R.D."/>
            <person name="Alland D."/>
            <person name="Eisen J.A."/>
            <person name="Carpenter L."/>
            <person name="White O."/>
            <person name="Peterson J.D."/>
            <person name="DeBoy R.T."/>
            <person name="Dodson R.J."/>
            <person name="Gwinn M.L."/>
            <person name="Haft D.H."/>
            <person name="Hickey E.K."/>
            <person name="Kolonay J.F."/>
            <person name="Nelson W.C."/>
            <person name="Umayam L.A."/>
            <person name="Ermolaeva M.D."/>
            <person name="Salzberg S.L."/>
            <person name="Delcher A."/>
            <person name="Utterback T.R."/>
            <person name="Weidman J.F."/>
            <person name="Khouri H.M."/>
            <person name="Gill J."/>
            <person name="Mikula A."/>
            <person name="Bishai W."/>
            <person name="Jacobs W.R. Jr."/>
            <person name="Venter J.C."/>
            <person name="Fraser C.M."/>
        </authorList>
    </citation>
    <scope>NUCLEOTIDE SEQUENCE [LARGE SCALE GENOMIC DNA]</scope>
    <source>
        <strain>CDC 1551 / Oshkosh</strain>
    </source>
</reference>
<name>FBVR_MYCTO</name>